<name>SYL_BRADU</name>
<sequence>MTSERYNARDSEPRWQAAWDEKAIFVSKNDDSRPKYYVLEMFPYPSGRIHIGHVRNYTLGDVLARFMRAKGFNVLHPMGWDAFGLPAENAAIERKVAPKAWTYDNIAAMKKQLRSIGLSLDWSREIATCDPSYYKHQQKMFLDFLRAGLAEREKRKVNWDPVDMTVLANEQVIDGKGWRSGAIVEQREMNQWVFKITKYSQELLSALDTLDRWPDKVRLMQRNWIGRSEGLLVRFALDQATTPAGESELKIFTTRPDTLFGAKFMAISADHPLATAAAAKDPKLAEFIAEIKKIGTAQEIIDTAEKQGFDTGIRAIHPFDPSWKLPVYVANFVLMEYGTGAIFGCPAHDQRDLDFVNKYNLGNTPVVCPEGQDPKSFVITDTAYDGDGRMINSRFLDGMTIEQAKDEVAKRLESELRGNAPVGERQVNFRLRDWGISRQRYWGCPIPVIHCPTCDVVPVPDADLPVKLPDDATFDKPGNALDHHPTWKHVTCPQCGGKAQRETDTMDTFVDSSWYFARFTDPWNENAPTTPAVANRMLPIDQYIGGVEHAILHLLYSRFFTRAMKATGHVALDEPFAGMFTQGMVVHETYQKADGSYVQPAEVKIELGGNGRRATLLTTGEDIQIGAIEKMSKSKKNTVDPDDIIETYGADVARWFMLSDSPPDRDVIWSDERVQGASRFVQRLWRLVNDSVELGKAAPAARPASFGADATALRKAAHGALDKVTTEIERLHFNVCLAHIREFTNAFSEVLQRPGQPAADLAWAIREASQILVQLFSPMMPHLAEECWQVLGQKGLVSEANWPQIERDLLVEDSVTLVVQVNGKKRGEVTVATAAQNPEIEAAVLALDAVKLALDGKPVRKVIIVPKRIVNVVG</sequence>
<gene>
    <name evidence="1" type="primary">leuS</name>
    <name type="ordered locus">blr0627</name>
</gene>
<protein>
    <recommendedName>
        <fullName evidence="1">Leucine--tRNA ligase</fullName>
        <ecNumber evidence="1">6.1.1.4</ecNumber>
    </recommendedName>
    <alternativeName>
        <fullName evidence="1">Leucyl-tRNA synthetase</fullName>
        <shortName evidence="1">LeuRS</shortName>
    </alternativeName>
</protein>
<dbReference type="EC" id="6.1.1.4" evidence="1"/>
<dbReference type="EMBL" id="BA000040">
    <property type="protein sequence ID" value="BAC45892.1"/>
    <property type="molecule type" value="Genomic_DNA"/>
</dbReference>
<dbReference type="RefSeq" id="NP_767267.1">
    <property type="nucleotide sequence ID" value="NC_004463.1"/>
</dbReference>
<dbReference type="RefSeq" id="WP_011083454.1">
    <property type="nucleotide sequence ID" value="NC_004463.1"/>
</dbReference>
<dbReference type="SMR" id="Q89WQ1"/>
<dbReference type="FunCoup" id="Q89WQ1">
    <property type="interactions" value="732"/>
</dbReference>
<dbReference type="STRING" id="224911.AAV28_42410"/>
<dbReference type="EnsemblBacteria" id="BAC45892">
    <property type="protein sequence ID" value="BAC45892"/>
    <property type="gene ID" value="BAC45892"/>
</dbReference>
<dbReference type="GeneID" id="46495772"/>
<dbReference type="KEGG" id="bja:blr0627"/>
<dbReference type="PATRIC" id="fig|224911.44.peg.9167"/>
<dbReference type="eggNOG" id="COG0495">
    <property type="taxonomic scope" value="Bacteria"/>
</dbReference>
<dbReference type="HOGENOM" id="CLU_004427_0_0_5"/>
<dbReference type="InParanoid" id="Q89WQ1"/>
<dbReference type="OrthoDB" id="9810365at2"/>
<dbReference type="PhylomeDB" id="Q89WQ1"/>
<dbReference type="Proteomes" id="UP000002526">
    <property type="component" value="Chromosome"/>
</dbReference>
<dbReference type="GO" id="GO:0005829">
    <property type="term" value="C:cytosol"/>
    <property type="evidence" value="ECO:0000318"/>
    <property type="project" value="GO_Central"/>
</dbReference>
<dbReference type="GO" id="GO:0002161">
    <property type="term" value="F:aminoacyl-tRNA deacylase activity"/>
    <property type="evidence" value="ECO:0007669"/>
    <property type="project" value="InterPro"/>
</dbReference>
<dbReference type="GO" id="GO:0005524">
    <property type="term" value="F:ATP binding"/>
    <property type="evidence" value="ECO:0007669"/>
    <property type="project" value="UniProtKB-UniRule"/>
</dbReference>
<dbReference type="GO" id="GO:0004823">
    <property type="term" value="F:leucine-tRNA ligase activity"/>
    <property type="evidence" value="ECO:0000318"/>
    <property type="project" value="GO_Central"/>
</dbReference>
<dbReference type="GO" id="GO:0006429">
    <property type="term" value="P:leucyl-tRNA aminoacylation"/>
    <property type="evidence" value="ECO:0000318"/>
    <property type="project" value="GO_Central"/>
</dbReference>
<dbReference type="CDD" id="cd07958">
    <property type="entry name" value="Anticodon_Ia_Leu_BEm"/>
    <property type="match status" value="1"/>
</dbReference>
<dbReference type="CDD" id="cd00812">
    <property type="entry name" value="LeuRS_core"/>
    <property type="match status" value="1"/>
</dbReference>
<dbReference type="FunFam" id="1.10.730.10:FF:000002">
    <property type="entry name" value="Leucine--tRNA ligase"/>
    <property type="match status" value="1"/>
</dbReference>
<dbReference type="FunFam" id="3.10.20.590:FF:000001">
    <property type="entry name" value="Leucine--tRNA ligase"/>
    <property type="match status" value="1"/>
</dbReference>
<dbReference type="FunFam" id="3.40.50.620:FF:000003">
    <property type="entry name" value="Leucine--tRNA ligase"/>
    <property type="match status" value="1"/>
</dbReference>
<dbReference type="Gene3D" id="2.20.28.290">
    <property type="match status" value="1"/>
</dbReference>
<dbReference type="Gene3D" id="3.10.20.590">
    <property type="match status" value="1"/>
</dbReference>
<dbReference type="Gene3D" id="3.40.50.620">
    <property type="entry name" value="HUPs"/>
    <property type="match status" value="2"/>
</dbReference>
<dbReference type="Gene3D" id="1.10.730.10">
    <property type="entry name" value="Isoleucyl-tRNA Synthetase, Domain 1"/>
    <property type="match status" value="1"/>
</dbReference>
<dbReference type="HAMAP" id="MF_00049_B">
    <property type="entry name" value="Leu_tRNA_synth_B"/>
    <property type="match status" value="1"/>
</dbReference>
<dbReference type="InterPro" id="IPR001412">
    <property type="entry name" value="aa-tRNA-synth_I_CS"/>
</dbReference>
<dbReference type="InterPro" id="IPR002300">
    <property type="entry name" value="aa-tRNA-synth_Ia"/>
</dbReference>
<dbReference type="InterPro" id="IPR002302">
    <property type="entry name" value="Leu-tRNA-ligase"/>
</dbReference>
<dbReference type="InterPro" id="IPR025709">
    <property type="entry name" value="Leu_tRNA-synth_edit"/>
</dbReference>
<dbReference type="InterPro" id="IPR013155">
    <property type="entry name" value="M/V/L/I-tRNA-synth_anticd-bd"/>
</dbReference>
<dbReference type="InterPro" id="IPR015413">
    <property type="entry name" value="Methionyl/Leucyl_tRNA_Synth"/>
</dbReference>
<dbReference type="InterPro" id="IPR014729">
    <property type="entry name" value="Rossmann-like_a/b/a_fold"/>
</dbReference>
<dbReference type="InterPro" id="IPR009080">
    <property type="entry name" value="tRNAsynth_Ia_anticodon-bd"/>
</dbReference>
<dbReference type="InterPro" id="IPR009008">
    <property type="entry name" value="Val/Leu/Ile-tRNA-synth_edit"/>
</dbReference>
<dbReference type="NCBIfam" id="TIGR00396">
    <property type="entry name" value="leuS_bact"/>
    <property type="match status" value="1"/>
</dbReference>
<dbReference type="PANTHER" id="PTHR43740:SF2">
    <property type="entry name" value="LEUCINE--TRNA LIGASE, MITOCHONDRIAL"/>
    <property type="match status" value="1"/>
</dbReference>
<dbReference type="PANTHER" id="PTHR43740">
    <property type="entry name" value="LEUCYL-TRNA SYNTHETASE"/>
    <property type="match status" value="1"/>
</dbReference>
<dbReference type="Pfam" id="PF08264">
    <property type="entry name" value="Anticodon_1"/>
    <property type="match status" value="1"/>
</dbReference>
<dbReference type="Pfam" id="PF00133">
    <property type="entry name" value="tRNA-synt_1"/>
    <property type="match status" value="2"/>
</dbReference>
<dbReference type="Pfam" id="PF13603">
    <property type="entry name" value="tRNA-synt_1_2"/>
    <property type="match status" value="1"/>
</dbReference>
<dbReference type="Pfam" id="PF09334">
    <property type="entry name" value="tRNA-synt_1g"/>
    <property type="match status" value="1"/>
</dbReference>
<dbReference type="PRINTS" id="PR00985">
    <property type="entry name" value="TRNASYNTHLEU"/>
</dbReference>
<dbReference type="SUPFAM" id="SSF47323">
    <property type="entry name" value="Anticodon-binding domain of a subclass of class I aminoacyl-tRNA synthetases"/>
    <property type="match status" value="1"/>
</dbReference>
<dbReference type="SUPFAM" id="SSF52374">
    <property type="entry name" value="Nucleotidylyl transferase"/>
    <property type="match status" value="1"/>
</dbReference>
<dbReference type="SUPFAM" id="SSF50677">
    <property type="entry name" value="ValRS/IleRS/LeuRS editing domain"/>
    <property type="match status" value="1"/>
</dbReference>
<dbReference type="PROSITE" id="PS00178">
    <property type="entry name" value="AA_TRNA_LIGASE_I"/>
    <property type="match status" value="1"/>
</dbReference>
<accession>Q89WQ1</accession>
<keyword id="KW-0030">Aminoacyl-tRNA synthetase</keyword>
<keyword id="KW-0067">ATP-binding</keyword>
<keyword id="KW-0963">Cytoplasm</keyword>
<keyword id="KW-0436">Ligase</keyword>
<keyword id="KW-0547">Nucleotide-binding</keyword>
<keyword id="KW-0648">Protein biosynthesis</keyword>
<keyword id="KW-1185">Reference proteome</keyword>
<organism>
    <name type="scientific">Bradyrhizobium diazoefficiens (strain JCM 10833 / BCRC 13528 / IAM 13628 / NBRC 14792 / USDA 110)</name>
    <dbReference type="NCBI Taxonomy" id="224911"/>
    <lineage>
        <taxon>Bacteria</taxon>
        <taxon>Pseudomonadati</taxon>
        <taxon>Pseudomonadota</taxon>
        <taxon>Alphaproteobacteria</taxon>
        <taxon>Hyphomicrobiales</taxon>
        <taxon>Nitrobacteraceae</taxon>
        <taxon>Bradyrhizobium</taxon>
    </lineage>
</organism>
<feature type="chain" id="PRO_0000151984" description="Leucine--tRNA ligase">
    <location>
        <begin position="1"/>
        <end position="874"/>
    </location>
</feature>
<feature type="short sequence motif" description="'HIGH' region">
    <location>
        <begin position="43"/>
        <end position="53"/>
    </location>
</feature>
<feature type="short sequence motif" description="'KMSKS' region">
    <location>
        <begin position="630"/>
        <end position="634"/>
    </location>
</feature>
<feature type="binding site" evidence="1">
    <location>
        <position position="633"/>
    </location>
    <ligand>
        <name>ATP</name>
        <dbReference type="ChEBI" id="CHEBI:30616"/>
    </ligand>
</feature>
<evidence type="ECO:0000255" key="1">
    <source>
        <dbReference type="HAMAP-Rule" id="MF_00049"/>
    </source>
</evidence>
<reference key="1">
    <citation type="journal article" date="2002" name="DNA Res.">
        <title>Complete genomic sequence of nitrogen-fixing symbiotic bacterium Bradyrhizobium japonicum USDA110.</title>
        <authorList>
            <person name="Kaneko T."/>
            <person name="Nakamura Y."/>
            <person name="Sato S."/>
            <person name="Minamisawa K."/>
            <person name="Uchiumi T."/>
            <person name="Sasamoto S."/>
            <person name="Watanabe A."/>
            <person name="Idesawa K."/>
            <person name="Iriguchi M."/>
            <person name="Kawashima K."/>
            <person name="Kohara M."/>
            <person name="Matsumoto M."/>
            <person name="Shimpo S."/>
            <person name="Tsuruoka H."/>
            <person name="Wada T."/>
            <person name="Yamada M."/>
            <person name="Tabata S."/>
        </authorList>
    </citation>
    <scope>NUCLEOTIDE SEQUENCE [LARGE SCALE GENOMIC DNA]</scope>
    <source>
        <strain>JCM 10833 / BCRC 13528 / IAM 13628 / NBRC 14792 / USDA 110</strain>
    </source>
</reference>
<proteinExistence type="inferred from homology"/>
<comment type="catalytic activity">
    <reaction evidence="1">
        <text>tRNA(Leu) + L-leucine + ATP = L-leucyl-tRNA(Leu) + AMP + diphosphate</text>
        <dbReference type="Rhea" id="RHEA:11688"/>
        <dbReference type="Rhea" id="RHEA-COMP:9613"/>
        <dbReference type="Rhea" id="RHEA-COMP:9622"/>
        <dbReference type="ChEBI" id="CHEBI:30616"/>
        <dbReference type="ChEBI" id="CHEBI:33019"/>
        <dbReference type="ChEBI" id="CHEBI:57427"/>
        <dbReference type="ChEBI" id="CHEBI:78442"/>
        <dbReference type="ChEBI" id="CHEBI:78494"/>
        <dbReference type="ChEBI" id="CHEBI:456215"/>
        <dbReference type="EC" id="6.1.1.4"/>
    </reaction>
</comment>
<comment type="subcellular location">
    <subcellularLocation>
        <location evidence="1">Cytoplasm</location>
    </subcellularLocation>
</comment>
<comment type="similarity">
    <text evidence="1">Belongs to the class-I aminoacyl-tRNA synthetase family.</text>
</comment>